<comment type="function">
    <text evidence="2">A core subunit of photosystem II (PSII), required for optimal photosynthesis, probably helps stabilize the reaction center.</text>
</comment>
<comment type="subunit">
    <text evidence="5">PSII is composed of 1 copy each of membrane proteins PsbA, PsbB, PsbC, PsbD, PsbE, PsbF, PsbH, PsbI, PsbJ, PsbK, PsbL, PsbM, PsbT, PsbX, PsbY, PsbZ, Psb30/Ycf12, peripheral proteins of the oxygen-evolving complex and a large number of cofactors. It forms dimeric complexes.</text>
</comment>
<comment type="subcellular location">
    <subcellularLocation>
        <location evidence="1 2">Plastid</location>
        <location evidence="1 2">Chloroplast thylakoid membrane</location>
        <topology evidence="1">Single-pass membrane protein</topology>
    </subcellularLocation>
</comment>
<comment type="disruption phenotype">
    <text evidence="2">About 15% decrease in O(2) evolution, no visible change in PSII protein profile under moderate light (50 umol photons/m(2)/s), increased sensitivity to photoinhibition under high light (1000 umol photons/m(2)/s).</text>
</comment>
<comment type="similarity">
    <text evidence="1">Belongs to the Psb30/Ycf12 family.</text>
</comment>
<proteinExistence type="evidence at protein level"/>
<geneLocation type="chloroplast"/>
<dbReference type="EMBL" id="U40346">
    <property type="protein sequence ID" value="AAA91171.1"/>
    <property type="molecule type" value="Genomic_DNA"/>
</dbReference>
<dbReference type="EMBL" id="FJ423446">
    <property type="protein sequence ID" value="ACJ50110.1"/>
    <property type="molecule type" value="Genomic_DNA"/>
</dbReference>
<dbReference type="EMBL" id="BK000554">
    <property type="protein sequence ID" value="DAA00923.1"/>
    <property type="molecule type" value="Genomic_DNA"/>
</dbReference>
<dbReference type="PIR" id="T08018">
    <property type="entry name" value="T08018"/>
</dbReference>
<dbReference type="RefSeq" id="NP_958378.1">
    <property type="nucleotide sequence ID" value="NC_005353.1"/>
</dbReference>
<dbReference type="PDB" id="6KAC">
    <property type="method" value="EM"/>
    <property type="resolution" value="2.70 A"/>
    <property type="chains" value="V/v=1-33"/>
</dbReference>
<dbReference type="PDB" id="8KDE">
    <property type="method" value="EM"/>
    <property type="resolution" value="2.60 A"/>
    <property type="chains" value="V=1-33"/>
</dbReference>
<dbReference type="PDB" id="8R2I">
    <property type="method" value="EM"/>
    <property type="resolution" value="2.90 A"/>
    <property type="chains" value="1=1-32"/>
</dbReference>
<dbReference type="PDB" id="8ZEE">
    <property type="method" value="EM"/>
    <property type="resolution" value="2.90 A"/>
    <property type="chains" value="V=1-33"/>
</dbReference>
<dbReference type="PDBsum" id="6KAC"/>
<dbReference type="PDBsum" id="8KDE"/>
<dbReference type="PDBsum" id="8R2I"/>
<dbReference type="PDBsum" id="8ZEE"/>
<dbReference type="EMDB" id="EMD-18848"/>
<dbReference type="EMDB" id="EMD-37133"/>
<dbReference type="EMDB" id="EMD-60026"/>
<dbReference type="EMDB" id="EMD-9955"/>
<dbReference type="SMR" id="P50370"/>
<dbReference type="STRING" id="3055.P50370"/>
<dbReference type="PaxDb" id="3055-DAA00923"/>
<dbReference type="GeneID" id="2716971"/>
<dbReference type="KEGG" id="cre:ChreCp022"/>
<dbReference type="HOGENOM" id="CLU_196761_2_0_1"/>
<dbReference type="InParanoid" id="P50370"/>
<dbReference type="Proteomes" id="UP000006906">
    <property type="component" value="Chloroplast"/>
</dbReference>
<dbReference type="GO" id="GO:0009535">
    <property type="term" value="C:chloroplast thylakoid membrane"/>
    <property type="evidence" value="ECO:0007669"/>
    <property type="project" value="UniProtKB-SubCell"/>
</dbReference>
<dbReference type="GO" id="GO:0009523">
    <property type="term" value="C:photosystem II"/>
    <property type="evidence" value="ECO:0007669"/>
    <property type="project" value="UniProtKB-KW"/>
</dbReference>
<dbReference type="GO" id="GO:0015979">
    <property type="term" value="P:photosynthesis"/>
    <property type="evidence" value="ECO:0007669"/>
    <property type="project" value="UniProtKB-KW"/>
</dbReference>
<dbReference type="HAMAP" id="MF_01329">
    <property type="entry name" value="PSII_Psb30_Ycf12"/>
    <property type="match status" value="1"/>
</dbReference>
<dbReference type="InterPro" id="IPR010284">
    <property type="entry name" value="PSII_Ycf12_core-subunit"/>
</dbReference>
<dbReference type="NCBIfam" id="NF010239">
    <property type="entry name" value="PRK13686.1"/>
    <property type="match status" value="1"/>
</dbReference>
<dbReference type="Pfam" id="PF05969">
    <property type="entry name" value="PSII_Ycf12"/>
    <property type="match status" value="1"/>
</dbReference>
<feature type="chain" id="PRO_0000059015" description="Photosystem II reaction center protein Psb30">
    <location>
        <begin position="1"/>
        <end position="33"/>
    </location>
</feature>
<feature type="transmembrane region" description="Helical" evidence="1">
    <location>
        <begin position="5"/>
        <end position="25"/>
    </location>
</feature>
<feature type="helix" evidence="6">
    <location>
        <begin position="3"/>
        <end position="28"/>
    </location>
</feature>
<protein>
    <recommendedName>
        <fullName evidence="1 3">Photosystem II reaction center protein Psb30</fullName>
    </recommendedName>
    <alternativeName>
        <fullName evidence="1">Photosystem II reaction center protein Ycf12</fullName>
    </alternativeName>
</protein>
<organism>
    <name type="scientific">Chlamydomonas reinhardtii</name>
    <name type="common">Chlamydomonas smithii</name>
    <dbReference type="NCBI Taxonomy" id="3055"/>
    <lineage>
        <taxon>Eukaryota</taxon>
        <taxon>Viridiplantae</taxon>
        <taxon>Chlorophyta</taxon>
        <taxon>core chlorophytes</taxon>
        <taxon>Chlorophyceae</taxon>
        <taxon>CS clade</taxon>
        <taxon>Chlamydomonadales</taxon>
        <taxon>Chlamydomonadaceae</taxon>
        <taxon>Chlamydomonas</taxon>
    </lineage>
</organism>
<evidence type="ECO:0000255" key="1">
    <source>
        <dbReference type="HAMAP-Rule" id="MF_01329"/>
    </source>
</evidence>
<evidence type="ECO:0000269" key="2">
    <source>
    </source>
</evidence>
<evidence type="ECO:0000303" key="3">
    <source>
    </source>
</evidence>
<evidence type="ECO:0000303" key="4">
    <source ref="1"/>
</evidence>
<evidence type="ECO:0000305" key="5">
    <source>
    </source>
</evidence>
<evidence type="ECO:0007829" key="6">
    <source>
        <dbReference type="PDB" id="8KDE"/>
    </source>
</evidence>
<accession>P50370</accession>
<accession>B7U1G4</accession>
<sequence>MNIELALTLVSLVLVVSAGPLVVVLLSARGGNL</sequence>
<keyword id="KW-0002">3D-structure</keyword>
<keyword id="KW-0150">Chloroplast</keyword>
<keyword id="KW-0472">Membrane</keyword>
<keyword id="KW-0602">Photosynthesis</keyword>
<keyword id="KW-0604">Photosystem II</keyword>
<keyword id="KW-0934">Plastid</keyword>
<keyword id="KW-1185">Reference proteome</keyword>
<keyword id="KW-0793">Thylakoid</keyword>
<keyword id="KW-0812">Transmembrane</keyword>
<keyword id="KW-1133">Transmembrane helix</keyword>
<reference key="1">
    <citation type="online journal article" date="1995" name="Plant Gene Register">
        <title>Nucleotide sequences of the chloroplast trnS-GCU and ycf12 genes of Chlamydomonas reinhardtii.</title>
        <authorList>
            <person name="Khrebtukova I."/>
            <person name="Spreitzer R.J."/>
        </authorList>
        <locator>PGR95-117</locator>
    </citation>
    <scope>NUCLEOTIDE SEQUENCE [GENOMIC DNA]</scope>
    <source>
        <strain>2137</strain>
    </source>
</reference>
<reference key="2">
    <citation type="journal article" date="2009" name="BMC Evol. Biol.">
        <title>Nucleotide diversity of the Chlamydomonas reinhardtii plastid genome: addressing the mutational-hazard hypothesis.</title>
        <authorList>
            <person name="Smith D.R."/>
            <person name="Lee R.W."/>
        </authorList>
    </citation>
    <scope>NUCLEOTIDE SEQUENCE [LARGE SCALE GENOMIC DNA]</scope>
    <source>
        <strain>CC-503</strain>
    </source>
</reference>
<reference key="3">
    <citation type="journal article" date="2002" name="Plant Cell">
        <title>The Chlamydomonas reinhardtii plastid chromosome: islands of genes in a sea of repeats.</title>
        <authorList>
            <person name="Maul J.E."/>
            <person name="Lilly J.W."/>
            <person name="Cui L."/>
            <person name="dePamphilis C.W."/>
            <person name="Miller W."/>
            <person name="Harris E.H."/>
            <person name="Stern D.B."/>
        </authorList>
    </citation>
    <scope>IDENTIFICATION</scope>
    <scope>COMPLETE PLASTID GENOME</scope>
</reference>
<reference key="4">
    <citation type="journal article" date="2011" name="J. Photochem. Photobiol. B">
        <title>Psb30 is a photosystem II reaction center subunit and is required for optimal growth in high light in Chlamydomonas reinhardtii.</title>
        <authorList>
            <person name="Inoue-Kashino N."/>
            <person name="Kashino Y."/>
            <person name="Takahashi Y."/>
        </authorList>
    </citation>
    <scope>FUNCTION</scope>
    <scope>SUBUNIT</scope>
    <scope>SUBCELLULAR LOCATION</scope>
    <scope>DISRUPTION PHENOTYPE</scope>
    <source>
        <strain>137c / CC-125</strain>
    </source>
</reference>
<gene>
    <name evidence="1 3" type="primary">psb30</name>
    <name evidence="1 4" type="synonym">ycf12</name>
</gene>
<name>PSB30_CHLRE</name>